<evidence type="ECO:0000255" key="1">
    <source>
        <dbReference type="HAMAP-Rule" id="MF_00766"/>
    </source>
</evidence>
<sequence>MKILRKLLFWLILVPILLVLLMQLYFFLQIGWWVNHNPDSTSFMRQQLSVLQDKNPQAQLKHKWVPYKRISNNLKRAIIASEDSNFSGHEGIDWDALEKAYEKNVRKGKVVAGGSTITQQLAKNLFLSGDRSYIRKGQEVVITYMLEYWMDKERIFEIYLNVVEWGVGVFGAEAAAQHYYGTSAAQLSAPQAARLAVMLPNPRFYDTHRGTAYLGRRTDLILRRMGSAELP</sequence>
<comment type="function">
    <text evidence="1">Peptidoglycan polymerase that catalyzes glycan chain elongation from lipid-linked precursors.</text>
</comment>
<comment type="catalytic activity">
    <reaction evidence="1">
        <text>[GlcNAc-(1-&gt;4)-Mur2Ac(oyl-L-Ala-gamma-D-Glu-L-Lys-D-Ala-D-Ala)](n)-di-trans,octa-cis-undecaprenyl diphosphate + beta-D-GlcNAc-(1-&gt;4)-Mur2Ac(oyl-L-Ala-gamma-D-Glu-L-Lys-D-Ala-D-Ala)-di-trans,octa-cis-undecaprenyl diphosphate = [GlcNAc-(1-&gt;4)-Mur2Ac(oyl-L-Ala-gamma-D-Glu-L-Lys-D-Ala-D-Ala)](n+1)-di-trans,octa-cis-undecaprenyl diphosphate + di-trans,octa-cis-undecaprenyl diphosphate + H(+)</text>
        <dbReference type="Rhea" id="RHEA:23708"/>
        <dbReference type="Rhea" id="RHEA-COMP:9602"/>
        <dbReference type="Rhea" id="RHEA-COMP:9603"/>
        <dbReference type="ChEBI" id="CHEBI:15378"/>
        <dbReference type="ChEBI" id="CHEBI:58405"/>
        <dbReference type="ChEBI" id="CHEBI:60033"/>
        <dbReference type="ChEBI" id="CHEBI:78435"/>
        <dbReference type="EC" id="2.4.99.28"/>
    </reaction>
</comment>
<comment type="pathway">
    <text evidence="1">Cell wall biogenesis; peptidoglycan biosynthesis.</text>
</comment>
<comment type="subcellular location">
    <subcellularLocation>
        <location evidence="1">Cell inner membrane</location>
        <topology evidence="1">Single-pass membrane protein</topology>
    </subcellularLocation>
</comment>
<comment type="similarity">
    <text evidence="1">Belongs to the glycosyltransferase 51 family.</text>
</comment>
<gene>
    <name evidence="1" type="primary">mtgA</name>
    <name type="ordered locus">HEAR2752</name>
</gene>
<accession>A4G8N2</accession>
<organism>
    <name type="scientific">Herminiimonas arsenicoxydans</name>
    <dbReference type="NCBI Taxonomy" id="204773"/>
    <lineage>
        <taxon>Bacteria</taxon>
        <taxon>Pseudomonadati</taxon>
        <taxon>Pseudomonadota</taxon>
        <taxon>Betaproteobacteria</taxon>
        <taxon>Burkholderiales</taxon>
        <taxon>Oxalobacteraceae</taxon>
        <taxon>Herminiimonas</taxon>
    </lineage>
</organism>
<dbReference type="EC" id="2.4.99.28" evidence="1"/>
<dbReference type="EMBL" id="CU207211">
    <property type="protein sequence ID" value="CAL62869.1"/>
    <property type="molecule type" value="Genomic_DNA"/>
</dbReference>
<dbReference type="SMR" id="A4G8N2"/>
<dbReference type="STRING" id="204773.HEAR2752"/>
<dbReference type="CAZy" id="GT51">
    <property type="family name" value="Glycosyltransferase Family 51"/>
</dbReference>
<dbReference type="KEGG" id="har:HEAR2752"/>
<dbReference type="eggNOG" id="COG0744">
    <property type="taxonomic scope" value="Bacteria"/>
</dbReference>
<dbReference type="HOGENOM" id="CLU_006354_1_0_4"/>
<dbReference type="OrthoDB" id="9766909at2"/>
<dbReference type="UniPathway" id="UPA00219"/>
<dbReference type="Proteomes" id="UP000006697">
    <property type="component" value="Chromosome"/>
</dbReference>
<dbReference type="GO" id="GO:0009274">
    <property type="term" value="C:peptidoglycan-based cell wall"/>
    <property type="evidence" value="ECO:0007669"/>
    <property type="project" value="InterPro"/>
</dbReference>
<dbReference type="GO" id="GO:0005886">
    <property type="term" value="C:plasma membrane"/>
    <property type="evidence" value="ECO:0007669"/>
    <property type="project" value="UniProtKB-SubCell"/>
</dbReference>
<dbReference type="GO" id="GO:0016763">
    <property type="term" value="F:pentosyltransferase activity"/>
    <property type="evidence" value="ECO:0007669"/>
    <property type="project" value="InterPro"/>
</dbReference>
<dbReference type="GO" id="GO:0008955">
    <property type="term" value="F:peptidoglycan glycosyltransferase activity"/>
    <property type="evidence" value="ECO:0007669"/>
    <property type="project" value="UniProtKB-UniRule"/>
</dbReference>
<dbReference type="GO" id="GO:0071555">
    <property type="term" value="P:cell wall organization"/>
    <property type="evidence" value="ECO:0007669"/>
    <property type="project" value="UniProtKB-KW"/>
</dbReference>
<dbReference type="GO" id="GO:0009252">
    <property type="term" value="P:peptidoglycan biosynthetic process"/>
    <property type="evidence" value="ECO:0007669"/>
    <property type="project" value="UniProtKB-UniRule"/>
</dbReference>
<dbReference type="GO" id="GO:0008360">
    <property type="term" value="P:regulation of cell shape"/>
    <property type="evidence" value="ECO:0007669"/>
    <property type="project" value="UniProtKB-KW"/>
</dbReference>
<dbReference type="Gene3D" id="1.10.3810.10">
    <property type="entry name" value="Biosynthetic peptidoglycan transglycosylase-like"/>
    <property type="match status" value="1"/>
</dbReference>
<dbReference type="HAMAP" id="MF_00766">
    <property type="entry name" value="PGT_MtgA"/>
    <property type="match status" value="1"/>
</dbReference>
<dbReference type="InterPro" id="IPR001264">
    <property type="entry name" value="Glyco_trans_51"/>
</dbReference>
<dbReference type="InterPro" id="IPR023346">
    <property type="entry name" value="Lysozyme-like_dom_sf"/>
</dbReference>
<dbReference type="InterPro" id="IPR036950">
    <property type="entry name" value="PBP_transglycosylase"/>
</dbReference>
<dbReference type="InterPro" id="IPR011812">
    <property type="entry name" value="Pep_trsgly"/>
</dbReference>
<dbReference type="NCBIfam" id="TIGR02070">
    <property type="entry name" value="mono_pep_trsgly"/>
    <property type="match status" value="1"/>
</dbReference>
<dbReference type="PANTHER" id="PTHR30400:SF0">
    <property type="entry name" value="BIOSYNTHETIC PEPTIDOGLYCAN TRANSGLYCOSYLASE"/>
    <property type="match status" value="1"/>
</dbReference>
<dbReference type="PANTHER" id="PTHR30400">
    <property type="entry name" value="MONOFUNCTIONAL BIOSYNTHETIC PEPTIDOGLYCAN TRANSGLYCOSYLASE"/>
    <property type="match status" value="1"/>
</dbReference>
<dbReference type="Pfam" id="PF00912">
    <property type="entry name" value="Transgly"/>
    <property type="match status" value="1"/>
</dbReference>
<dbReference type="SUPFAM" id="SSF53955">
    <property type="entry name" value="Lysozyme-like"/>
    <property type="match status" value="1"/>
</dbReference>
<protein>
    <recommendedName>
        <fullName evidence="1">Biosynthetic peptidoglycan transglycosylase</fullName>
        <ecNumber evidence="1">2.4.99.28</ecNumber>
    </recommendedName>
    <alternativeName>
        <fullName evidence="1">Glycan polymerase</fullName>
    </alternativeName>
    <alternativeName>
        <fullName evidence="1">Peptidoglycan glycosyltransferase MtgA</fullName>
        <shortName evidence="1">PGT</shortName>
    </alternativeName>
</protein>
<keyword id="KW-0997">Cell inner membrane</keyword>
<keyword id="KW-1003">Cell membrane</keyword>
<keyword id="KW-0133">Cell shape</keyword>
<keyword id="KW-0961">Cell wall biogenesis/degradation</keyword>
<keyword id="KW-0328">Glycosyltransferase</keyword>
<keyword id="KW-0472">Membrane</keyword>
<keyword id="KW-0573">Peptidoglycan synthesis</keyword>
<keyword id="KW-1185">Reference proteome</keyword>
<keyword id="KW-0808">Transferase</keyword>
<keyword id="KW-0812">Transmembrane</keyword>
<keyword id="KW-1133">Transmembrane helix</keyword>
<reference key="1">
    <citation type="journal article" date="2007" name="PLoS Genet.">
        <title>A tale of two oxidation states: bacterial colonization of arsenic-rich environments.</title>
        <authorList>
            <person name="Muller D."/>
            <person name="Medigue C."/>
            <person name="Koechler S."/>
            <person name="Barbe V."/>
            <person name="Barakat M."/>
            <person name="Talla E."/>
            <person name="Bonnefoy V."/>
            <person name="Krin E."/>
            <person name="Arsene-Ploetze F."/>
            <person name="Carapito C."/>
            <person name="Chandler M."/>
            <person name="Cournoyer B."/>
            <person name="Cruveiller S."/>
            <person name="Dossat C."/>
            <person name="Duval S."/>
            <person name="Heymann M."/>
            <person name="Leize E."/>
            <person name="Lieutaud A."/>
            <person name="Lievremont D."/>
            <person name="Makita Y."/>
            <person name="Mangenot S."/>
            <person name="Nitschke W."/>
            <person name="Ortet P."/>
            <person name="Perdrial N."/>
            <person name="Schoepp B."/>
            <person name="Siguier P."/>
            <person name="Simeonova D.D."/>
            <person name="Rouy Z."/>
            <person name="Segurens B."/>
            <person name="Turlin E."/>
            <person name="Vallenet D."/>
            <person name="van Dorsselaer A."/>
            <person name="Weiss S."/>
            <person name="Weissenbach J."/>
            <person name="Lett M.-C."/>
            <person name="Danchin A."/>
            <person name="Bertin P.N."/>
        </authorList>
    </citation>
    <scope>NUCLEOTIDE SEQUENCE [LARGE SCALE GENOMIC DNA]</scope>
    <source>
        <strain>ULPAs1</strain>
    </source>
</reference>
<feature type="chain" id="PRO_1000017307" description="Biosynthetic peptidoglycan transglycosylase">
    <location>
        <begin position="1"/>
        <end position="231"/>
    </location>
</feature>
<feature type="transmembrane region" description="Helical" evidence="1">
    <location>
        <begin position="7"/>
        <end position="27"/>
    </location>
</feature>
<name>MTGA_HERAR</name>
<proteinExistence type="inferred from homology"/>